<protein>
    <recommendedName>
        <fullName evidence="1">Spermidine export protein MdtI</fullName>
    </recommendedName>
</protein>
<proteinExistence type="inferred from homology"/>
<organism>
    <name type="scientific">Shigella sonnei (strain Ss046)</name>
    <dbReference type="NCBI Taxonomy" id="300269"/>
    <lineage>
        <taxon>Bacteria</taxon>
        <taxon>Pseudomonadati</taxon>
        <taxon>Pseudomonadota</taxon>
        <taxon>Gammaproteobacteria</taxon>
        <taxon>Enterobacterales</taxon>
        <taxon>Enterobacteriaceae</taxon>
        <taxon>Shigella</taxon>
    </lineage>
</organism>
<keyword id="KW-0997">Cell inner membrane</keyword>
<keyword id="KW-1003">Cell membrane</keyword>
<keyword id="KW-0472">Membrane</keyword>
<keyword id="KW-1185">Reference proteome</keyword>
<keyword id="KW-0812">Transmembrane</keyword>
<keyword id="KW-1133">Transmembrane helix</keyword>
<keyword id="KW-0813">Transport</keyword>
<accession>Q3Z1V2</accession>
<reference key="1">
    <citation type="journal article" date="2005" name="Nucleic Acids Res.">
        <title>Genome dynamics and diversity of Shigella species, the etiologic agents of bacillary dysentery.</title>
        <authorList>
            <person name="Yang F."/>
            <person name="Yang J."/>
            <person name="Zhang X."/>
            <person name="Chen L."/>
            <person name="Jiang Y."/>
            <person name="Yan Y."/>
            <person name="Tang X."/>
            <person name="Wang J."/>
            <person name="Xiong Z."/>
            <person name="Dong J."/>
            <person name="Xue Y."/>
            <person name="Zhu Y."/>
            <person name="Xu X."/>
            <person name="Sun L."/>
            <person name="Chen S."/>
            <person name="Nie H."/>
            <person name="Peng J."/>
            <person name="Xu J."/>
            <person name="Wang Y."/>
            <person name="Yuan Z."/>
            <person name="Wen Y."/>
            <person name="Yao Z."/>
            <person name="Shen Y."/>
            <person name="Qiang B."/>
            <person name="Hou Y."/>
            <person name="Yu J."/>
            <person name="Jin Q."/>
        </authorList>
    </citation>
    <scope>NUCLEOTIDE SEQUENCE [LARGE SCALE GENOMIC DNA]</scope>
    <source>
        <strain>Ss046</strain>
    </source>
</reference>
<name>MDTI_SHISS</name>
<feature type="chain" id="PRO_0000331154" description="Spermidine export protein MdtI">
    <location>
        <begin position="1"/>
        <end position="109"/>
    </location>
</feature>
<feature type="transmembrane region" description="Helical" evidence="1">
    <location>
        <begin position="6"/>
        <end position="26"/>
    </location>
</feature>
<feature type="transmembrane region" description="Helical" evidence="1">
    <location>
        <begin position="36"/>
        <end position="56"/>
    </location>
</feature>
<feature type="transmembrane region" description="Helical" evidence="1">
    <location>
        <begin position="64"/>
        <end position="84"/>
    </location>
</feature>
<feature type="transmembrane region" description="Helical" evidence="1">
    <location>
        <begin position="88"/>
        <end position="108"/>
    </location>
</feature>
<sequence length="109" mass="11720">MAQFEWVHAAWLALAIVLEIVANVFLKFSDGFRRKIFGLLSLAAVLAAFSALSQAVKGIDLSVAYALWGGFGIAATLAAGWILFGQRLNRKGWIGLVLLLAGMIMVKLA</sequence>
<gene>
    <name evidence="1" type="primary">mdtI</name>
    <name type="ordered locus">SSON_1561</name>
</gene>
<evidence type="ECO:0000255" key="1">
    <source>
        <dbReference type="HAMAP-Rule" id="MF_01597"/>
    </source>
</evidence>
<dbReference type="EMBL" id="CP000038">
    <property type="protein sequence ID" value="AAZ88260.1"/>
    <property type="molecule type" value="Genomic_DNA"/>
</dbReference>
<dbReference type="RefSeq" id="WP_000046661.1">
    <property type="nucleotide sequence ID" value="NC_007384.1"/>
</dbReference>
<dbReference type="SMR" id="Q3Z1V2"/>
<dbReference type="GeneID" id="93775747"/>
<dbReference type="KEGG" id="ssn:SSON_1561"/>
<dbReference type="HOGENOM" id="CLU_133067_0_4_6"/>
<dbReference type="Proteomes" id="UP000002529">
    <property type="component" value="Chromosome"/>
</dbReference>
<dbReference type="GO" id="GO:0005886">
    <property type="term" value="C:plasma membrane"/>
    <property type="evidence" value="ECO:0007669"/>
    <property type="project" value="UniProtKB-SubCell"/>
</dbReference>
<dbReference type="GO" id="GO:0015199">
    <property type="term" value="F:amino-acid betaine transmembrane transporter activity"/>
    <property type="evidence" value="ECO:0007669"/>
    <property type="project" value="TreeGrafter"/>
</dbReference>
<dbReference type="GO" id="GO:0015297">
    <property type="term" value="F:antiporter activity"/>
    <property type="evidence" value="ECO:0007669"/>
    <property type="project" value="TreeGrafter"/>
</dbReference>
<dbReference type="GO" id="GO:0015220">
    <property type="term" value="F:choline transmembrane transporter activity"/>
    <property type="evidence" value="ECO:0007669"/>
    <property type="project" value="TreeGrafter"/>
</dbReference>
<dbReference type="GO" id="GO:0015606">
    <property type="term" value="F:spermidine transmembrane transporter activity"/>
    <property type="evidence" value="ECO:0007669"/>
    <property type="project" value="UniProtKB-UniRule"/>
</dbReference>
<dbReference type="GO" id="GO:0031460">
    <property type="term" value="P:glycine betaine transport"/>
    <property type="evidence" value="ECO:0007669"/>
    <property type="project" value="TreeGrafter"/>
</dbReference>
<dbReference type="FunFam" id="1.10.3730.20:FF:000001">
    <property type="entry name" value="Quaternary ammonium compound resistance transporter SugE"/>
    <property type="match status" value="1"/>
</dbReference>
<dbReference type="Gene3D" id="1.10.3730.20">
    <property type="match status" value="1"/>
</dbReference>
<dbReference type="HAMAP" id="MF_01597">
    <property type="entry name" value="MdtI"/>
    <property type="match status" value="1"/>
</dbReference>
<dbReference type="InterPro" id="IPR000390">
    <property type="entry name" value="Small_drug/metabolite_transptr"/>
</dbReference>
<dbReference type="InterPro" id="IPR045324">
    <property type="entry name" value="Small_multidrug_res"/>
</dbReference>
<dbReference type="InterPro" id="IPR023737">
    <property type="entry name" value="Spermidine_export_MdtI"/>
</dbReference>
<dbReference type="NCBIfam" id="NF007934">
    <property type="entry name" value="PRK10650.1"/>
    <property type="match status" value="1"/>
</dbReference>
<dbReference type="PANTHER" id="PTHR30561">
    <property type="entry name" value="SMR FAMILY PROTON-DEPENDENT DRUG EFFLUX TRANSPORTER SUGE"/>
    <property type="match status" value="1"/>
</dbReference>
<dbReference type="PANTHER" id="PTHR30561:SF6">
    <property type="entry name" value="SPERMIDINE EXPORT PROTEIN MDTI"/>
    <property type="match status" value="1"/>
</dbReference>
<dbReference type="Pfam" id="PF00893">
    <property type="entry name" value="Multi_Drug_Res"/>
    <property type="match status" value="1"/>
</dbReference>
<dbReference type="SUPFAM" id="SSF103481">
    <property type="entry name" value="Multidrug resistance efflux transporter EmrE"/>
    <property type="match status" value="1"/>
</dbReference>
<comment type="function">
    <text evidence="1">Catalyzes the excretion of spermidine.</text>
</comment>
<comment type="subunit">
    <text evidence="1">Forms a complex with MdtJ.</text>
</comment>
<comment type="subcellular location">
    <subcellularLocation>
        <location evidence="1">Cell inner membrane</location>
        <topology evidence="1">Multi-pass membrane protein</topology>
    </subcellularLocation>
</comment>
<comment type="similarity">
    <text evidence="1">Belongs to the drug/metabolite transporter (DMT) superfamily. Small multidrug resistance (SMR) (TC 2.A.7.1) family. MdtI subfamily.</text>
</comment>